<protein>
    <recommendedName>
        <fullName evidence="6">Phospholipase A1 member A</fullName>
        <ecNumber evidence="2">3.1.1.111</ecNumber>
    </recommendedName>
    <alternativeName>
        <fullName>Phosphatidylserine-specific phospholipase A1</fullName>
        <shortName>PS-PLA1</shortName>
    </alternativeName>
</protein>
<proteinExistence type="evidence at transcript level"/>
<comment type="function">
    <text evidence="2 3">Hydrolyzes the ester bond of the acyl group attached at the sn-1 position of phosphatidylserines (phospholipase A1 activity) and 1-acyl-2-lysophosphatidylserines (lysophospholipase activity) in the pathway of phosphatidylserines acyl chain remodeling (By similarity). Cleaves phosphatidylserines exposed on the outer leaflet of the plasma membrane of apoptotic cells producing 2-acyl-1-lysophosphatidylserines, which in turn enhance mast cell activation and histamine production. Has no activity toward other glycerophospholipids including phosphatidylcholines, phosphatidylethanolamines, phosphatidic acids or phosphatidylinositols, or glycerolipids such as triolein (By similarity).</text>
</comment>
<comment type="catalytic activity">
    <reaction evidence="2">
        <text>a 1,2-diacyl-sn-glycero-3-phospho-L-serine + H2O = a 2-acyl-sn-glycero-3-phospho-L-serine + a fatty acid + H(+)</text>
        <dbReference type="Rhea" id="RHEA:42212"/>
        <dbReference type="ChEBI" id="CHEBI:15377"/>
        <dbReference type="ChEBI" id="CHEBI:15378"/>
        <dbReference type="ChEBI" id="CHEBI:28868"/>
        <dbReference type="ChEBI" id="CHEBI:57262"/>
        <dbReference type="ChEBI" id="CHEBI:65214"/>
        <dbReference type="EC" id="3.1.1.111"/>
    </reaction>
    <physiologicalReaction direction="left-to-right" evidence="2">
        <dbReference type="Rhea" id="RHEA:42213"/>
    </physiologicalReaction>
</comment>
<comment type="catalytic activity">
    <reaction evidence="2">
        <text>1,2-di-(9Z)-octadecenoyl-sn-glycero-3-phospho-L-serine + H2O = 2-(9Z-octadecenoyl)-sn-glycero-3-phospho-L-serine + (9Z)-octadecenoate + H(+)</text>
        <dbReference type="Rhea" id="RHEA:40491"/>
        <dbReference type="ChEBI" id="CHEBI:15377"/>
        <dbReference type="ChEBI" id="CHEBI:15378"/>
        <dbReference type="ChEBI" id="CHEBI:30823"/>
        <dbReference type="ChEBI" id="CHEBI:74905"/>
        <dbReference type="ChEBI" id="CHEBI:77342"/>
    </reaction>
    <physiologicalReaction direction="left-to-right" evidence="2">
        <dbReference type="Rhea" id="RHEA:40492"/>
    </physiologicalReaction>
</comment>
<comment type="catalytic activity">
    <reaction evidence="2">
        <text>1-hexadecanoyl-2-(5Z,8Z,11Z,14Z-eicosatetraenoyl)-sn-glycero-3-phospho-L-serine + H2O = 2-(5Z,8Z,11Z,14Z)-eicosatetraenoyl-sn-glycero-3-phospho-L-serine + hexadecanoate + H(+)</text>
        <dbReference type="Rhea" id="RHEA:41187"/>
        <dbReference type="ChEBI" id="CHEBI:7896"/>
        <dbReference type="ChEBI" id="CHEBI:15377"/>
        <dbReference type="ChEBI" id="CHEBI:15378"/>
        <dbReference type="ChEBI" id="CHEBI:75032"/>
        <dbReference type="ChEBI" id="CHEBI:77830"/>
    </reaction>
    <physiologicalReaction direction="left-to-right" evidence="2">
        <dbReference type="Rhea" id="RHEA:41188"/>
    </physiologicalReaction>
</comment>
<comment type="catalytic activity">
    <reaction evidence="2">
        <text>a 1-acyl-sn-glycero-3-phospho-L-serine + H2O = sn-glycero-3-phospho-L-serine + a fatty acid + H(+)</text>
        <dbReference type="Rhea" id="RHEA:32979"/>
        <dbReference type="ChEBI" id="CHEBI:15377"/>
        <dbReference type="ChEBI" id="CHEBI:15378"/>
        <dbReference type="ChEBI" id="CHEBI:28868"/>
        <dbReference type="ChEBI" id="CHEBI:64379"/>
        <dbReference type="ChEBI" id="CHEBI:64765"/>
        <dbReference type="EC" id="3.1.1.111"/>
    </reaction>
    <physiologicalReaction direction="left-to-right" evidence="2">
        <dbReference type="Rhea" id="RHEA:32980"/>
    </physiologicalReaction>
</comment>
<comment type="catalytic activity">
    <reaction evidence="2">
        <text>1-(9Z-octadecenoyl)-sn-glycero-3-phospho-L-serine + H2O = sn-glycero-3-phospho-L-serine + (9Z)-octadecenoate + H(+)</text>
        <dbReference type="Rhea" id="RHEA:40499"/>
        <dbReference type="ChEBI" id="CHEBI:15377"/>
        <dbReference type="ChEBI" id="CHEBI:15378"/>
        <dbReference type="ChEBI" id="CHEBI:30823"/>
        <dbReference type="ChEBI" id="CHEBI:64765"/>
        <dbReference type="ChEBI" id="CHEBI:74617"/>
    </reaction>
    <physiologicalReaction direction="left-to-right" evidence="2">
        <dbReference type="Rhea" id="RHEA:40500"/>
    </physiologicalReaction>
</comment>
<comment type="subcellular location">
    <subcellularLocation>
        <location evidence="2">Secreted</location>
    </subcellularLocation>
</comment>
<comment type="similarity">
    <text evidence="6">Belongs to the AB hydrolase superfamily. Lipase family.</text>
</comment>
<sequence>MRPGLWETCFWLWGPLLWLSIGSSGNVPPTTQPKCTDFQSANLLRGTNLKVQFLLFTPSDPSCGQLVEEGSDIRSSEFNASLGTKVIIHGFRALGTKPSWIDKFISAVLRAADANVIAVDWVYGSTGVYYSAVENVVKLSLEISRFLSKLLELGVSESSIHIIGVSLGAHVGGMVGHFYKGQLGQITGLDPAGPEYTRASLEERLDAGDALFVEAIHTDTDNLGIRIPVGHVDYFVNGGQDQPGCPAFFHAGYNYLICDHMRAVHLYISALENTCPLMAFPCASYKAFLAGDCLDCFNPFLLSCPRIGLVERGGVMIEPLPKEVKVYLLTTSSAPYCVHHSLVEFYLKEKRKKDTSIEVTFLSNNVTSSVKITIPKQQLEGRGVMAHPNPQCQINQVKLKFQVSSRVWRKDRTPVVGTFCTAPLPVNDSKKTVCIPEPVRLQAGVPAFQDLKIACV</sequence>
<evidence type="ECO:0000250" key="1"/>
<evidence type="ECO:0000250" key="2">
    <source>
        <dbReference type="UniProtKB" id="P97535"/>
    </source>
</evidence>
<evidence type="ECO:0000250" key="3">
    <source>
        <dbReference type="UniProtKB" id="Q53H76"/>
    </source>
</evidence>
<evidence type="ECO:0000255" key="4"/>
<evidence type="ECO:0000255" key="5">
    <source>
        <dbReference type="PROSITE-ProRule" id="PRU10037"/>
    </source>
</evidence>
<evidence type="ECO:0000305" key="6"/>
<evidence type="ECO:0000312" key="7">
    <source>
        <dbReference type="MGI" id="MGI:1934677"/>
    </source>
</evidence>
<keyword id="KW-1015">Disulfide bond</keyword>
<keyword id="KW-0325">Glycoprotein</keyword>
<keyword id="KW-0378">Hydrolase</keyword>
<keyword id="KW-0442">Lipid degradation</keyword>
<keyword id="KW-0443">Lipid metabolism</keyword>
<keyword id="KW-1185">Reference proteome</keyword>
<keyword id="KW-0964">Secreted</keyword>
<keyword id="KW-0732">Signal</keyword>
<organism>
    <name type="scientific">Mus musculus</name>
    <name type="common">Mouse</name>
    <dbReference type="NCBI Taxonomy" id="10090"/>
    <lineage>
        <taxon>Eukaryota</taxon>
        <taxon>Metazoa</taxon>
        <taxon>Chordata</taxon>
        <taxon>Craniata</taxon>
        <taxon>Vertebrata</taxon>
        <taxon>Euteleostomi</taxon>
        <taxon>Mammalia</taxon>
        <taxon>Eutheria</taxon>
        <taxon>Euarchontoglires</taxon>
        <taxon>Glires</taxon>
        <taxon>Rodentia</taxon>
        <taxon>Myomorpha</taxon>
        <taxon>Muroidea</taxon>
        <taxon>Muridae</taxon>
        <taxon>Murinae</taxon>
        <taxon>Mus</taxon>
        <taxon>Mus</taxon>
    </lineage>
</organism>
<dbReference type="EC" id="3.1.1.111" evidence="2"/>
<dbReference type="EMBL" id="AF063498">
    <property type="protein sequence ID" value="AAL55475.1"/>
    <property type="molecule type" value="mRNA"/>
</dbReference>
<dbReference type="EMBL" id="AC154809">
    <property type="status" value="NOT_ANNOTATED_CDS"/>
    <property type="molecule type" value="Genomic_DNA"/>
</dbReference>
<dbReference type="EMBL" id="CAAA01219438">
    <property type="status" value="NOT_ANNOTATED_CDS"/>
    <property type="molecule type" value="Genomic_DNA"/>
</dbReference>
<dbReference type="EMBL" id="CT571259">
    <property type="status" value="NOT_ANNOTATED_CDS"/>
    <property type="molecule type" value="Genomic_DNA"/>
</dbReference>
<dbReference type="EMBL" id="BC003470">
    <property type="protein sequence ID" value="AAH03470.1"/>
    <property type="molecule type" value="mRNA"/>
</dbReference>
<dbReference type="EMBL" id="BC030670">
    <property type="protein sequence ID" value="AAH30670.1"/>
    <property type="molecule type" value="mRNA"/>
</dbReference>
<dbReference type="CCDS" id="CCDS28166.1"/>
<dbReference type="RefSeq" id="NP_598863.3">
    <property type="nucleotide sequence ID" value="NM_134102.4"/>
</dbReference>
<dbReference type="RefSeq" id="XP_006522834.1">
    <property type="nucleotide sequence ID" value="XM_006522771.1"/>
</dbReference>
<dbReference type="RefSeq" id="XP_006522835.1">
    <property type="nucleotide sequence ID" value="XM_006522772.1"/>
</dbReference>
<dbReference type="SMR" id="Q8VI78"/>
<dbReference type="FunCoup" id="Q8VI78">
    <property type="interactions" value="358"/>
</dbReference>
<dbReference type="STRING" id="10090.ENSMUSP00000002926"/>
<dbReference type="ESTHER" id="mouse-psplip">
    <property type="family name" value="Phospholipase"/>
</dbReference>
<dbReference type="GlyCosmos" id="Q8VI78">
    <property type="glycosylation" value="1 site, No reported glycans"/>
</dbReference>
<dbReference type="GlyGen" id="Q8VI78">
    <property type="glycosylation" value="2 sites, 2 N-linked glycans (2 sites)"/>
</dbReference>
<dbReference type="PhosphoSitePlus" id="Q8VI78"/>
<dbReference type="PaxDb" id="10090-ENSMUSP00000002926"/>
<dbReference type="PeptideAtlas" id="Q8VI78"/>
<dbReference type="ProteomicsDB" id="289610"/>
<dbReference type="Antibodypedia" id="32751">
    <property type="antibodies" value="222 antibodies from 28 providers"/>
</dbReference>
<dbReference type="DNASU" id="85031"/>
<dbReference type="Ensembl" id="ENSMUST00000002926.8">
    <property type="protein sequence ID" value="ENSMUSP00000002926.7"/>
    <property type="gene ID" value="ENSMUSG00000002847.8"/>
</dbReference>
<dbReference type="GeneID" id="85031"/>
<dbReference type="KEGG" id="mmu:85031"/>
<dbReference type="UCSC" id="uc007zew.1">
    <property type="organism name" value="mouse"/>
</dbReference>
<dbReference type="AGR" id="MGI:1934677"/>
<dbReference type="CTD" id="51365"/>
<dbReference type="MGI" id="MGI:1934677">
    <property type="gene designation" value="Pla1a"/>
</dbReference>
<dbReference type="VEuPathDB" id="HostDB:ENSMUSG00000002847"/>
<dbReference type="eggNOG" id="ENOG502QQQP">
    <property type="taxonomic scope" value="Eukaryota"/>
</dbReference>
<dbReference type="GeneTree" id="ENSGT00940000159279"/>
<dbReference type="HOGENOM" id="CLU_027171_3_1_1"/>
<dbReference type="InParanoid" id="Q8VI78"/>
<dbReference type="OMA" id="AHANPQC"/>
<dbReference type="OrthoDB" id="199913at2759"/>
<dbReference type="PhylomeDB" id="Q8VI78"/>
<dbReference type="TreeFam" id="TF324997"/>
<dbReference type="Reactome" id="R-MMU-1482801">
    <property type="pathway name" value="Acyl chain remodelling of PS"/>
</dbReference>
<dbReference type="BioGRID-ORCS" id="85031">
    <property type="hits" value="2 hits in 76 CRISPR screens"/>
</dbReference>
<dbReference type="ChiTaRS" id="Pla1a">
    <property type="organism name" value="mouse"/>
</dbReference>
<dbReference type="PRO" id="PR:Q8VI78"/>
<dbReference type="Proteomes" id="UP000000589">
    <property type="component" value="Chromosome 16"/>
</dbReference>
<dbReference type="RNAct" id="Q8VI78">
    <property type="molecule type" value="protein"/>
</dbReference>
<dbReference type="Bgee" id="ENSMUSG00000002847">
    <property type="expression patterns" value="Expressed in left lobe of liver and 97 other cell types or tissues"/>
</dbReference>
<dbReference type="GO" id="GO:0002080">
    <property type="term" value="C:acrosomal membrane"/>
    <property type="evidence" value="ECO:0000314"/>
    <property type="project" value="MGI"/>
</dbReference>
<dbReference type="GO" id="GO:0005615">
    <property type="term" value="C:extracellular space"/>
    <property type="evidence" value="ECO:0007005"/>
    <property type="project" value="BHF-UCL"/>
</dbReference>
<dbReference type="GO" id="GO:0008970">
    <property type="term" value="F:phospholipase A1 activity"/>
    <property type="evidence" value="ECO:0000314"/>
    <property type="project" value="MGI"/>
</dbReference>
<dbReference type="GO" id="GO:0016042">
    <property type="term" value="P:lipid catabolic process"/>
    <property type="evidence" value="ECO:0007669"/>
    <property type="project" value="UniProtKB-KW"/>
</dbReference>
<dbReference type="CDD" id="cd00707">
    <property type="entry name" value="Pancreat_lipase_like"/>
    <property type="match status" value="1"/>
</dbReference>
<dbReference type="FunFam" id="3.40.50.1820:FF:000081">
    <property type="entry name" value="phospholipase A1 member A isoform X1"/>
    <property type="match status" value="1"/>
</dbReference>
<dbReference type="Gene3D" id="3.40.50.1820">
    <property type="entry name" value="alpha/beta hydrolase"/>
    <property type="match status" value="1"/>
</dbReference>
<dbReference type="InterPro" id="IPR029058">
    <property type="entry name" value="AB_hydrolase_fold"/>
</dbReference>
<dbReference type="InterPro" id="IPR013818">
    <property type="entry name" value="Lipase"/>
</dbReference>
<dbReference type="InterPro" id="IPR016272">
    <property type="entry name" value="Lipase_LIPH"/>
</dbReference>
<dbReference type="InterPro" id="IPR033906">
    <property type="entry name" value="Lipase_N"/>
</dbReference>
<dbReference type="InterPro" id="IPR000734">
    <property type="entry name" value="TAG_lipase"/>
</dbReference>
<dbReference type="PANTHER" id="PTHR11610">
    <property type="entry name" value="LIPASE"/>
    <property type="match status" value="1"/>
</dbReference>
<dbReference type="PANTHER" id="PTHR11610:SF111">
    <property type="entry name" value="PHOSPHOLIPASE A1 MEMBER A"/>
    <property type="match status" value="1"/>
</dbReference>
<dbReference type="Pfam" id="PF00151">
    <property type="entry name" value="Lipase"/>
    <property type="match status" value="1"/>
</dbReference>
<dbReference type="PIRSF" id="PIRSF000865">
    <property type="entry name" value="Lipoprotein_lipase_LIPH"/>
    <property type="match status" value="1"/>
</dbReference>
<dbReference type="PRINTS" id="PR00821">
    <property type="entry name" value="TAGLIPASE"/>
</dbReference>
<dbReference type="SUPFAM" id="SSF53474">
    <property type="entry name" value="alpha/beta-Hydrolases"/>
    <property type="match status" value="1"/>
</dbReference>
<dbReference type="PROSITE" id="PS00120">
    <property type="entry name" value="LIPASE_SER"/>
    <property type="match status" value="1"/>
</dbReference>
<feature type="signal peptide" evidence="4">
    <location>
        <begin position="1"/>
        <end position="25"/>
    </location>
</feature>
<feature type="chain" id="PRO_0000273331" description="Phospholipase A1 member A">
    <location>
        <begin position="26"/>
        <end position="456"/>
    </location>
</feature>
<feature type="active site" description="Nucleophile" evidence="1">
    <location>
        <position position="166"/>
    </location>
</feature>
<feature type="active site" description="Charge relay system" evidence="5">
    <location>
        <position position="190"/>
    </location>
</feature>
<feature type="active site" description="Charge relay system" evidence="5">
    <location>
        <position position="260"/>
    </location>
</feature>
<feature type="glycosylation site" description="N-linked (GlcNAc...) asparagine" evidence="4">
    <location>
        <position position="365"/>
    </location>
</feature>
<feature type="disulfide bond" evidence="1">
    <location>
        <begin position="245"/>
        <end position="258"/>
    </location>
</feature>
<feature type="disulfide bond" evidence="1">
    <location>
        <begin position="282"/>
        <end position="293"/>
    </location>
</feature>
<feature type="disulfide bond" evidence="1">
    <location>
        <begin position="296"/>
        <end position="304"/>
    </location>
</feature>
<feature type="sequence conflict" description="In Ref. 3; AAH03470/AAH30670." evidence="6" ref="3">
    <original>G</original>
    <variation>R</variation>
    <location>
        <position position="83"/>
    </location>
</feature>
<feature type="sequence conflict" description="In Ref. 1; AAL55475." evidence="6" ref="1">
    <original>V</original>
    <variation>R</variation>
    <location>
        <position position="366"/>
    </location>
</feature>
<reference key="1">
    <citation type="submission" date="1998-05" db="EMBL/GenBank/DDBJ databases">
        <title>Molecular cloning and chromosomal mapping of PS-PLA1.</title>
        <authorList>
            <person name="Nagai Y."/>
            <person name="Aoki J."/>
            <person name="Amano K."/>
            <person name="Okamoto M."/>
            <person name="Taya C."/>
            <person name="Matsuda Y."/>
            <person name="Yonekawa H."/>
            <person name="Inoue K."/>
        </authorList>
    </citation>
    <scope>NUCLEOTIDE SEQUENCE [MRNA]</scope>
</reference>
<reference key="2">
    <citation type="journal article" date="2009" name="PLoS Biol.">
        <title>Lineage-specific biology revealed by a finished genome assembly of the mouse.</title>
        <authorList>
            <person name="Church D.M."/>
            <person name="Goodstadt L."/>
            <person name="Hillier L.W."/>
            <person name="Zody M.C."/>
            <person name="Goldstein S."/>
            <person name="She X."/>
            <person name="Bult C.J."/>
            <person name="Agarwala R."/>
            <person name="Cherry J.L."/>
            <person name="DiCuccio M."/>
            <person name="Hlavina W."/>
            <person name="Kapustin Y."/>
            <person name="Meric P."/>
            <person name="Maglott D."/>
            <person name="Birtle Z."/>
            <person name="Marques A.C."/>
            <person name="Graves T."/>
            <person name="Zhou S."/>
            <person name="Teague B."/>
            <person name="Potamousis K."/>
            <person name="Churas C."/>
            <person name="Place M."/>
            <person name="Herschleb J."/>
            <person name="Runnheim R."/>
            <person name="Forrest D."/>
            <person name="Amos-Landgraf J."/>
            <person name="Schwartz D.C."/>
            <person name="Cheng Z."/>
            <person name="Lindblad-Toh K."/>
            <person name="Eichler E.E."/>
            <person name="Ponting C.P."/>
        </authorList>
    </citation>
    <scope>NUCLEOTIDE SEQUENCE [LARGE SCALE GENOMIC DNA]</scope>
    <source>
        <strain>C57BL/6J</strain>
    </source>
</reference>
<reference key="3">
    <citation type="journal article" date="2004" name="Genome Res.">
        <title>The status, quality, and expansion of the NIH full-length cDNA project: the Mammalian Gene Collection (MGC).</title>
        <authorList>
            <consortium name="The MGC Project Team"/>
        </authorList>
    </citation>
    <scope>NUCLEOTIDE SEQUENCE [LARGE SCALE MRNA]</scope>
    <source>
        <strain>C57BL/6J</strain>
        <tissue>Mammary gland</tissue>
    </source>
</reference>
<reference key="4">
    <citation type="journal article" date="2001" name="Mamm. Genome">
        <title>Murine phosphatidylserine-specific phospholipase A1 (Ps-pla1) maps to chromosome 16 but is distinct from the lpd (lipid defect) locus.</title>
        <authorList>
            <person name="Wen X.-Y."/>
            <person name="Stewart A.K."/>
            <person name="Skaug J."/>
            <person name="Wei E."/>
            <person name="Tsui L.-C."/>
        </authorList>
    </citation>
    <scope>IDENTIFICATION</scope>
</reference>
<gene>
    <name evidence="7" type="primary">Pla1a</name>
    <name type="synonym">Pspla1</name>
</gene>
<accession>Q8VI78</accession>
<accession>E9QN71</accession>
<accession>Q99J51</accession>
<name>PLA1A_MOUSE</name>